<name>TARF_STAA8</name>
<dbReference type="EC" id="2.7.8.45" evidence="1"/>
<dbReference type="EMBL" id="CP000253">
    <property type="protein sequence ID" value="ABD29399.1"/>
    <property type="molecule type" value="Genomic_DNA"/>
</dbReference>
<dbReference type="RefSeq" id="WP_000594815.1">
    <property type="nucleotide sequence ID" value="NZ_LS483365.1"/>
</dbReference>
<dbReference type="RefSeq" id="YP_498819.1">
    <property type="nucleotide sequence ID" value="NC_007795.1"/>
</dbReference>
<dbReference type="SMR" id="Q2G1C1"/>
<dbReference type="STRING" id="93061.SAOUHSC_00223"/>
<dbReference type="PaxDb" id="1280-SAXN108_0234"/>
<dbReference type="GeneID" id="3920299"/>
<dbReference type="KEGG" id="sao:SAOUHSC_00223"/>
<dbReference type="PATRIC" id="fig|93061.5.peg.205"/>
<dbReference type="eggNOG" id="COG1887">
    <property type="taxonomic scope" value="Bacteria"/>
</dbReference>
<dbReference type="HOGENOM" id="CLU_029598_1_1_9"/>
<dbReference type="OrthoDB" id="9811865at2"/>
<dbReference type="BioCyc" id="MetaCyc:MONOMER-19977"/>
<dbReference type="BRENDA" id="2.7.8.45">
    <property type="organism ID" value="3352"/>
</dbReference>
<dbReference type="UniPathway" id="UPA00790"/>
<dbReference type="Proteomes" id="UP000008816">
    <property type="component" value="Chromosome"/>
</dbReference>
<dbReference type="GO" id="GO:0005886">
    <property type="term" value="C:plasma membrane"/>
    <property type="evidence" value="ECO:0007669"/>
    <property type="project" value="UniProtKB-SubCell"/>
</dbReference>
<dbReference type="GO" id="GO:0047355">
    <property type="term" value="F:CDP-glycerol glycerophosphotransferase activity"/>
    <property type="evidence" value="ECO:0007669"/>
    <property type="project" value="InterPro"/>
</dbReference>
<dbReference type="GO" id="GO:0071555">
    <property type="term" value="P:cell wall organization"/>
    <property type="evidence" value="ECO:0007669"/>
    <property type="project" value="UniProtKB-KW"/>
</dbReference>
<dbReference type="GO" id="GO:0019350">
    <property type="term" value="P:teichoic acid biosynthetic process"/>
    <property type="evidence" value="ECO:0007669"/>
    <property type="project" value="UniProtKB-KW"/>
</dbReference>
<dbReference type="Gene3D" id="3.40.50.11820">
    <property type="match status" value="1"/>
</dbReference>
<dbReference type="Gene3D" id="3.40.50.12580">
    <property type="match status" value="1"/>
</dbReference>
<dbReference type="InterPro" id="IPR007554">
    <property type="entry name" value="Glycerophosphate_synth"/>
</dbReference>
<dbReference type="InterPro" id="IPR043148">
    <property type="entry name" value="TagF_C"/>
</dbReference>
<dbReference type="InterPro" id="IPR043149">
    <property type="entry name" value="TagF_N"/>
</dbReference>
<dbReference type="InterPro" id="IPR049700">
    <property type="entry name" value="TarF"/>
</dbReference>
<dbReference type="InterPro" id="IPR051612">
    <property type="entry name" value="Teichoic_Acid_Biosynth"/>
</dbReference>
<dbReference type="NCBIfam" id="NF041712">
    <property type="entry name" value="techglyph_taseTarF"/>
    <property type="match status" value="1"/>
</dbReference>
<dbReference type="PANTHER" id="PTHR37316">
    <property type="entry name" value="TEICHOIC ACID GLYCEROL-PHOSPHATE PRIMASE"/>
    <property type="match status" value="1"/>
</dbReference>
<dbReference type="PANTHER" id="PTHR37316:SF3">
    <property type="entry name" value="TEICHOIC ACID GLYCEROL-PHOSPHATE TRANSFERASE"/>
    <property type="match status" value="1"/>
</dbReference>
<dbReference type="Pfam" id="PF04464">
    <property type="entry name" value="Glyphos_transf"/>
    <property type="match status" value="1"/>
</dbReference>
<dbReference type="SUPFAM" id="SSF53756">
    <property type="entry name" value="UDP-Glycosyltransferase/glycogen phosphorylase"/>
    <property type="match status" value="1"/>
</dbReference>
<reference key="1">
    <citation type="book" date="2006" name="Gram positive pathogens, 2nd edition">
        <title>The Staphylococcus aureus NCTC 8325 genome.</title>
        <editorList>
            <person name="Fischetti V."/>
            <person name="Novick R."/>
            <person name="Ferretti J."/>
            <person name="Portnoy D."/>
            <person name="Rood J."/>
        </editorList>
        <authorList>
            <person name="Gillaspy A.F."/>
            <person name="Worrell V."/>
            <person name="Orvis J."/>
            <person name="Roe B.A."/>
            <person name="Dyer D.W."/>
            <person name="Iandolo J.J."/>
        </authorList>
    </citation>
    <scope>NUCLEOTIDE SEQUENCE [LARGE SCALE GENOMIC DNA]</scope>
    <source>
        <strain evidence="5">NCTC 8325 / PS 47</strain>
    </source>
</reference>
<reference key="2">
    <citation type="journal article" date="2008" name="Chem. Biol.">
        <title>A revised pathway proposed for Staphylococcus aureus wall teichoic acid biosynthesis based on in vitro reconstitution of the intracellular steps.</title>
        <authorList>
            <person name="Brown S."/>
            <person name="Zhang Y.H."/>
            <person name="Walker S."/>
        </authorList>
    </citation>
    <scope>FUNCTION</scope>
    <scope>CATALYTIC ACTIVITY</scope>
    <scope>PATHWAY</scope>
    <source>
        <strain>NCTC 8325 / PS 47</strain>
    </source>
</reference>
<feature type="chain" id="PRO_0000438783" description="Teichoic acid glycerol-phosphate transferase">
    <location>
        <begin position="1"/>
        <end position="389"/>
    </location>
</feature>
<evidence type="ECO:0000269" key="1">
    <source>
    </source>
</evidence>
<evidence type="ECO:0000305" key="2"/>
<evidence type="ECO:0000305" key="3">
    <source>
    </source>
</evidence>
<evidence type="ECO:0000312" key="4">
    <source>
        <dbReference type="EMBL" id="ABD29399.1"/>
    </source>
</evidence>
<evidence type="ECO:0000312" key="5">
    <source>
        <dbReference type="Proteomes" id="UP000008816"/>
    </source>
</evidence>
<sequence length="389" mass="45961">MIKNTIKKLIEHSIYTTFKLLSKLPNKNLIYFESFHGKQYSDNPKALYEYLTEHSDAQLIWGVKKGYEHIFQQHNVPYVTKFSMKWFLAMPRAKAWMINTRTPDWLYKSPRTTYLQTWHGTPLKKIGLDISNVKMLGTNTQNYQDGFKKESQRWDYLVSPNPYSTSIFQNAFHVSRDKILETGYPRNDKLSHKRNDTEYINGIKTRLNIPLDKKVIMYAPTWRDDEAIREGSYQFNVNFDIEALRQALDDDYVILLRMHYLVVTRIDEHDDFVKDVSDYEDISDLYLISDALVTDYSSVMFDFGVLKRPQIFYAYDLDKYGDELRGFYMDYKKELPGPIVENQTALIDALKQIDETANEYIEARTVFYQKFCSLEDGQASQRICQTIFK</sequence>
<keyword id="KW-1003">Cell membrane</keyword>
<keyword id="KW-0961">Cell wall biogenesis/degradation</keyword>
<keyword id="KW-0472">Membrane</keyword>
<keyword id="KW-1185">Reference proteome</keyword>
<keyword id="KW-0777">Teichoic acid biosynthesis</keyword>
<keyword id="KW-0808">Transferase</keyword>
<comment type="function">
    <text evidence="1">Catalyzes the addition of a second glycerol phosphate unit from CDP-glycerol to the prenolpyrophosphate-linked disaccharide, to complete the linkage unit.</text>
</comment>
<comment type="catalytic activity">
    <reaction evidence="1">
        <text>4-O-[(2R)-glycerylphospho]-N-acetyl-beta-D-mannosaminyl-(1-&gt;4)-N-acetyl-alpha-D-glucosaminyl di-trans,octa-cis-undecaprenyl diphosphate + CDP-glycerol = 4-O-[di(2R)-glycerylphospho]-N-acetyl-beta-D-mannosaminyl-(1-&gt;4)-N-acetyl-alpha-D-glucosaminyl di-trans,octa-cis-undecaprenyl diphosphate + CMP + H(+)</text>
        <dbReference type="Rhea" id="RHEA:50880"/>
        <dbReference type="ChEBI" id="CHEBI:15378"/>
        <dbReference type="ChEBI" id="CHEBI:58311"/>
        <dbReference type="ChEBI" id="CHEBI:60377"/>
        <dbReference type="ChEBI" id="CHEBI:132211"/>
        <dbReference type="ChEBI" id="CHEBI:133867"/>
        <dbReference type="EC" id="2.7.8.45"/>
    </reaction>
</comment>
<comment type="pathway">
    <text evidence="3">Cell wall biogenesis; poly(ribitol phosphate) teichoic acid biosynthesis.</text>
</comment>
<comment type="subcellular location">
    <subcellularLocation>
        <location evidence="2">Cell membrane</location>
        <topology evidence="2">Peripheral membrane protein</topology>
    </subcellularLocation>
</comment>
<comment type="similarity">
    <text evidence="2">Belongs to the CDP-glycerol glycerophosphotransferase family.</text>
</comment>
<protein>
    <recommendedName>
        <fullName evidence="2">Teichoic acid glycerol-phosphate transferase</fullName>
        <ecNumber evidence="1">2.7.8.45</ecNumber>
    </recommendedName>
</protein>
<accession>Q2G1C1</accession>
<gene>
    <name type="primary">tarF</name>
    <name evidence="4" type="ordered locus">SAOUHSC_00223</name>
</gene>
<proteinExistence type="evidence at protein level"/>
<organism>
    <name type="scientific">Staphylococcus aureus (strain NCTC 8325 / PS 47)</name>
    <dbReference type="NCBI Taxonomy" id="93061"/>
    <lineage>
        <taxon>Bacteria</taxon>
        <taxon>Bacillati</taxon>
        <taxon>Bacillota</taxon>
        <taxon>Bacilli</taxon>
        <taxon>Bacillales</taxon>
        <taxon>Staphylococcaceae</taxon>
        <taxon>Staphylococcus</taxon>
    </lineage>
</organism>